<reference key="1">
    <citation type="journal article" date="1994" name="Science">
        <title>Complete nucleotide sequence of Saccharomyces cerevisiae chromosome VIII.</title>
        <authorList>
            <person name="Johnston M."/>
            <person name="Andrews S."/>
            <person name="Brinkman R."/>
            <person name="Cooper J."/>
            <person name="Ding H."/>
            <person name="Dover J."/>
            <person name="Du Z."/>
            <person name="Favello A."/>
            <person name="Fulton L."/>
            <person name="Gattung S."/>
            <person name="Geisel C."/>
            <person name="Kirsten J."/>
            <person name="Kucaba T."/>
            <person name="Hillier L.W."/>
            <person name="Jier M."/>
            <person name="Johnston L."/>
            <person name="Langston Y."/>
            <person name="Latreille P."/>
            <person name="Louis E.J."/>
            <person name="Macri C."/>
            <person name="Mardis E."/>
            <person name="Menezes S."/>
            <person name="Mouser L."/>
            <person name="Nhan M."/>
            <person name="Rifkin L."/>
            <person name="Riles L."/>
            <person name="St Peter H."/>
            <person name="Trevaskis E."/>
            <person name="Vaughan K."/>
            <person name="Vignati D."/>
            <person name="Wilcox L."/>
            <person name="Wohldman P."/>
            <person name="Waterston R."/>
            <person name="Wilson R."/>
            <person name="Vaudin M."/>
        </authorList>
    </citation>
    <scope>NUCLEOTIDE SEQUENCE [LARGE SCALE GENOMIC DNA]</scope>
    <source>
        <strain>ATCC 204508 / S288c</strain>
    </source>
</reference>
<reference key="2">
    <citation type="journal article" date="2014" name="G3 (Bethesda)">
        <title>The reference genome sequence of Saccharomyces cerevisiae: Then and now.</title>
        <authorList>
            <person name="Engel S.R."/>
            <person name="Dietrich F.S."/>
            <person name="Fisk D.G."/>
            <person name="Binkley G."/>
            <person name="Balakrishnan R."/>
            <person name="Costanzo M.C."/>
            <person name="Dwight S.S."/>
            <person name="Hitz B.C."/>
            <person name="Karra K."/>
            <person name="Nash R.S."/>
            <person name="Weng S."/>
            <person name="Wong E.D."/>
            <person name="Lloyd P."/>
            <person name="Skrzypek M.S."/>
            <person name="Miyasato S.R."/>
            <person name="Simison M."/>
            <person name="Cherry J.M."/>
        </authorList>
    </citation>
    <scope>GENOME REANNOTATION</scope>
    <source>
        <strain>ATCC 204508 / S288c</strain>
    </source>
</reference>
<evidence type="ECO:0000255" key="1"/>
<evidence type="ECO:0000305" key="2"/>
<evidence type="ECO:0000305" key="3">
    <source>
    </source>
</evidence>
<evidence type="ECO:0000312" key="4">
    <source>
        <dbReference type="SGD" id="S000028772"/>
    </source>
</evidence>
<proteinExistence type="uncertain"/>
<gene>
    <name evidence="4" type="ordered locus">YHL019W-A</name>
</gene>
<keyword id="KW-0472">Membrane</keyword>
<keyword id="KW-0812">Transmembrane</keyword>
<keyword id="KW-1133">Transmembrane helix</keyword>
<protein>
    <recommendedName>
        <fullName evidence="2">Putative uncharacterized membrane protein YHL019W-A</fullName>
    </recommendedName>
</protein>
<sequence>MRCLRKRQTIYAYSSSLTVLYLTQGKDWYCNCGSSTFKYSTFRPLHVQYGISKSMLTNLSRGVTWEVCWSCTCLYSSSSLGPVRKGGGFIEVFISSCRRSYSSWLKRGNSATMDAHVFGSSSSLLYCELLFVLCSRCPFMVCISQRRKSSLKLNTTLPMFALNLICLLRSILYSWKTFVRGILTFSFDVELVGLKFV</sequence>
<name>YH019_YEAST</name>
<accession>A0A023PXL1</accession>
<organism>
    <name type="scientific">Saccharomyces cerevisiae (strain ATCC 204508 / S288c)</name>
    <name type="common">Baker's yeast</name>
    <dbReference type="NCBI Taxonomy" id="559292"/>
    <lineage>
        <taxon>Eukaryota</taxon>
        <taxon>Fungi</taxon>
        <taxon>Dikarya</taxon>
        <taxon>Ascomycota</taxon>
        <taxon>Saccharomycotina</taxon>
        <taxon>Saccharomycetes</taxon>
        <taxon>Saccharomycetales</taxon>
        <taxon>Saccharomycetaceae</taxon>
        <taxon>Saccharomyces</taxon>
    </lineage>
</organism>
<dbReference type="EMBL" id="KJ412252">
    <property type="protein sequence ID" value="AHX39295.1"/>
    <property type="molecule type" value="Genomic_DNA"/>
</dbReference>
<dbReference type="PaxDb" id="4932-YHL019W-A"/>
<dbReference type="EnsemblFungi" id="YHL019W-A_mRNA">
    <property type="protein sequence ID" value="YHL019W-A"/>
    <property type="gene ID" value="YHL019W-A"/>
</dbReference>
<dbReference type="AGR" id="SGD:S000028772"/>
<dbReference type="SGD" id="S000028772">
    <property type="gene designation" value="YHL019W-A"/>
</dbReference>
<dbReference type="HOGENOM" id="CLU_1384862_0_0_1"/>
<dbReference type="GO" id="GO:0016020">
    <property type="term" value="C:membrane"/>
    <property type="evidence" value="ECO:0007669"/>
    <property type="project" value="UniProtKB-SubCell"/>
</dbReference>
<feature type="chain" id="PRO_0000431016" description="Putative uncharacterized membrane protein YHL019W-A">
    <location>
        <begin position="1"/>
        <end position="197"/>
    </location>
</feature>
<feature type="transmembrane region" description="Helical" evidence="1">
    <location>
        <begin position="150"/>
        <end position="172"/>
    </location>
</feature>
<comment type="subcellular location">
    <subcellularLocation>
        <location evidence="1">Membrane</location>
        <topology evidence="1">Single-pass membrane protein</topology>
    </subcellularLocation>
</comment>
<comment type="miscellaneous">
    <text evidence="2">Partially overlaps APM2.</text>
</comment>
<comment type="caution">
    <text evidence="3">Product of a dubious gene prediction unlikely to encode a functional protein. Because of that it is not part of the S.cerevisiae S288c complete/reference proteome set.</text>
</comment>